<gene>
    <name type="primary">TOR1AIP1</name>
</gene>
<accession>Q5R7A3</accession>
<keyword id="KW-0175">Coiled coil</keyword>
<keyword id="KW-0325">Glycoprotein</keyword>
<keyword id="KW-1017">Isopeptide bond</keyword>
<keyword id="KW-0472">Membrane</keyword>
<keyword id="KW-0539">Nucleus</keyword>
<keyword id="KW-0597">Phosphoprotein</keyword>
<keyword id="KW-1185">Reference proteome</keyword>
<keyword id="KW-0812">Transmembrane</keyword>
<keyword id="KW-1133">Transmembrane helix</keyword>
<keyword id="KW-0832">Ubl conjugation</keyword>
<evidence type="ECO:0000250" key="1"/>
<evidence type="ECO:0000250" key="2">
    <source>
        <dbReference type="UniProtKB" id="Q5JTV8"/>
    </source>
</evidence>
<evidence type="ECO:0000250" key="3">
    <source>
        <dbReference type="UniProtKB" id="Q5PQX1"/>
    </source>
</evidence>
<evidence type="ECO:0000250" key="4">
    <source>
        <dbReference type="UniProtKB" id="Q921T2"/>
    </source>
</evidence>
<evidence type="ECO:0000255" key="5"/>
<evidence type="ECO:0000256" key="6">
    <source>
        <dbReference type="SAM" id="MobiDB-lite"/>
    </source>
</evidence>
<evidence type="ECO:0000305" key="7"/>
<proteinExistence type="evidence at transcript level"/>
<dbReference type="EMBL" id="CR860215">
    <property type="protein sequence ID" value="CAH92357.1"/>
    <property type="molecule type" value="mRNA"/>
</dbReference>
<dbReference type="RefSeq" id="NP_001126388.1">
    <property type="nucleotide sequence ID" value="NM_001132916.2"/>
</dbReference>
<dbReference type="SMR" id="Q5R7A3"/>
<dbReference type="FunCoup" id="Q5R7A3">
    <property type="interactions" value="1897"/>
</dbReference>
<dbReference type="STRING" id="9601.ENSPPYP00000000522"/>
<dbReference type="GlyCosmos" id="Q5R7A3">
    <property type="glycosylation" value="1 site, No reported glycans"/>
</dbReference>
<dbReference type="GeneID" id="100173369"/>
<dbReference type="KEGG" id="pon:100173369"/>
<dbReference type="CTD" id="26092"/>
<dbReference type="eggNOG" id="ENOG502QUV7">
    <property type="taxonomic scope" value="Eukaryota"/>
</dbReference>
<dbReference type="InParanoid" id="Q5R7A3"/>
<dbReference type="OrthoDB" id="6258998at2759"/>
<dbReference type="Proteomes" id="UP000001595">
    <property type="component" value="Unplaced"/>
</dbReference>
<dbReference type="GO" id="GO:0005637">
    <property type="term" value="C:nuclear inner membrane"/>
    <property type="evidence" value="ECO:0007669"/>
    <property type="project" value="UniProtKB-SubCell"/>
</dbReference>
<dbReference type="GO" id="GO:0005634">
    <property type="term" value="C:nucleus"/>
    <property type="evidence" value="ECO:0000250"/>
    <property type="project" value="UniProtKB"/>
</dbReference>
<dbReference type="GO" id="GO:0001671">
    <property type="term" value="F:ATPase activator activity"/>
    <property type="evidence" value="ECO:0000250"/>
    <property type="project" value="UniProtKB"/>
</dbReference>
<dbReference type="GO" id="GO:0071763">
    <property type="term" value="P:nuclear membrane organization"/>
    <property type="evidence" value="ECO:0007669"/>
    <property type="project" value="TreeGrafter"/>
</dbReference>
<dbReference type="GO" id="GO:0032781">
    <property type="term" value="P:positive regulation of ATP-dependent activity"/>
    <property type="evidence" value="ECO:0000250"/>
    <property type="project" value="UniProtKB"/>
</dbReference>
<dbReference type="GO" id="GO:0034504">
    <property type="term" value="P:protein localization to nucleus"/>
    <property type="evidence" value="ECO:0000250"/>
    <property type="project" value="UniProtKB"/>
</dbReference>
<dbReference type="FunFam" id="3.40.50.12190:FF:000001">
    <property type="entry name" value="torsin-1A-interacting protein 1 isoform X1"/>
    <property type="match status" value="1"/>
</dbReference>
<dbReference type="Gene3D" id="3.40.50.12190">
    <property type="match status" value="1"/>
</dbReference>
<dbReference type="InterPro" id="IPR038599">
    <property type="entry name" value="LAP1C-like_C_sf"/>
</dbReference>
<dbReference type="InterPro" id="IPR008662">
    <property type="entry name" value="TOIP1/2"/>
</dbReference>
<dbReference type="InterPro" id="IPR046753">
    <property type="entry name" value="TOIP1/2_C"/>
</dbReference>
<dbReference type="InterPro" id="IPR046754">
    <property type="entry name" value="TOIP1/2_N"/>
</dbReference>
<dbReference type="PANTHER" id="PTHR18843">
    <property type="entry name" value="TORSIN-1A-INTERACTING PROTEIN"/>
    <property type="match status" value="1"/>
</dbReference>
<dbReference type="PANTHER" id="PTHR18843:SF6">
    <property type="entry name" value="TORSIN-1A-INTERACTING PROTEIN 1"/>
    <property type="match status" value="1"/>
</dbReference>
<dbReference type="Pfam" id="PF05609">
    <property type="entry name" value="LAP1_C"/>
    <property type="match status" value="1"/>
</dbReference>
<dbReference type="Pfam" id="PF20443">
    <property type="entry name" value="LAP1_N"/>
    <property type="match status" value="1"/>
</dbReference>
<reference key="1">
    <citation type="submission" date="2004-11" db="EMBL/GenBank/DDBJ databases">
        <authorList>
            <consortium name="The German cDNA consortium"/>
        </authorList>
    </citation>
    <scope>NUCLEOTIDE SEQUENCE [LARGE SCALE MRNA]</scope>
    <source>
        <tissue>Kidney</tissue>
    </source>
</reference>
<protein>
    <recommendedName>
        <fullName>Torsin-1A-interacting protein 1</fullName>
    </recommendedName>
    <alternativeName>
        <fullName>Lamina-associated polypeptide 1B</fullName>
        <shortName>LAP1B</shortName>
    </alternativeName>
</protein>
<feature type="chain" id="PRO_0000228837" description="Torsin-1A-interacting protein 1">
    <location>
        <begin position="1"/>
        <end position="598"/>
    </location>
</feature>
<feature type="topological domain" description="Nuclear" evidence="5">
    <location>
        <begin position="1"/>
        <end position="351"/>
    </location>
</feature>
<feature type="transmembrane region" description="Helical" evidence="5">
    <location>
        <begin position="352"/>
        <end position="372"/>
    </location>
</feature>
<feature type="topological domain" description="Perinuclear space" evidence="5">
    <location>
        <begin position="373"/>
        <end position="598"/>
    </location>
</feature>
<feature type="region of interest" description="Disordered" evidence="6">
    <location>
        <begin position="19"/>
        <end position="254"/>
    </location>
</feature>
<feature type="region of interest" description="Disordered" evidence="6">
    <location>
        <begin position="267"/>
        <end position="314"/>
    </location>
</feature>
<feature type="region of interest" description="Disordered" evidence="6">
    <location>
        <begin position="322"/>
        <end position="341"/>
    </location>
</feature>
<feature type="region of interest" description="Interaction with TOR1A" evidence="1">
    <location>
        <begin position="371"/>
        <end position="598"/>
    </location>
</feature>
<feature type="coiled-coil region" evidence="5">
    <location>
        <begin position="374"/>
        <end position="450"/>
    </location>
</feature>
<feature type="compositionally biased region" description="Basic and acidic residues" evidence="6">
    <location>
        <begin position="73"/>
        <end position="101"/>
    </location>
</feature>
<feature type="compositionally biased region" description="Basic and acidic residues" evidence="6">
    <location>
        <begin position="115"/>
        <end position="124"/>
    </location>
</feature>
<feature type="compositionally biased region" description="Polar residues" evidence="6">
    <location>
        <begin position="205"/>
        <end position="214"/>
    </location>
</feature>
<feature type="compositionally biased region" description="Basic and acidic residues" evidence="6">
    <location>
        <begin position="238"/>
        <end position="250"/>
    </location>
</feature>
<feature type="compositionally biased region" description="Polar residues" evidence="6">
    <location>
        <begin position="277"/>
        <end position="287"/>
    </location>
</feature>
<feature type="compositionally biased region" description="Polar residues" evidence="6">
    <location>
        <begin position="300"/>
        <end position="313"/>
    </location>
</feature>
<feature type="compositionally biased region" description="Polar residues" evidence="6">
    <location>
        <begin position="326"/>
        <end position="341"/>
    </location>
</feature>
<feature type="modified residue" description="Phosphoserine" evidence="4">
    <location>
        <position position="60"/>
    </location>
</feature>
<feature type="modified residue" description="Phosphoserine" evidence="2">
    <location>
        <position position="135"/>
    </location>
</feature>
<feature type="modified residue" description="Phosphoserine" evidence="2">
    <location>
        <position position="143"/>
    </location>
</feature>
<feature type="modified residue" description="Phosphoserine" evidence="2">
    <location>
        <position position="154"/>
    </location>
</feature>
<feature type="modified residue" description="Phosphoserine" evidence="2">
    <location>
        <position position="156"/>
    </location>
</feature>
<feature type="modified residue" description="Phosphoserine" evidence="2">
    <location>
        <position position="157"/>
    </location>
</feature>
<feature type="modified residue" description="Phosphoserine" evidence="2">
    <location>
        <position position="187"/>
    </location>
</feature>
<feature type="modified residue" description="Phosphoserine" evidence="2">
    <location>
        <position position="216"/>
    </location>
</feature>
<feature type="modified residue" description="Phosphothreonine" evidence="2">
    <location>
        <position position="221"/>
    </location>
</feature>
<feature type="modified residue" description="Phosphoserine" evidence="2">
    <location>
        <position position="227"/>
    </location>
</feature>
<feature type="modified residue" description="Phosphoserine" evidence="3">
    <location>
        <position position="230"/>
    </location>
</feature>
<feature type="modified residue" description="Phosphoserine" evidence="3">
    <location>
        <position position="242"/>
    </location>
</feature>
<feature type="modified residue" description="Phosphoserine" evidence="2">
    <location>
        <position position="320"/>
    </location>
</feature>
<feature type="modified residue" description="Phosphoserine" evidence="2">
    <location>
        <position position="330"/>
    </location>
</feature>
<feature type="glycosylation site" description="N-linked (GlcNAc...) asparagine" evidence="5">
    <location>
        <position position="414"/>
    </location>
</feature>
<feature type="cross-link" description="Glycyl lysine isopeptide (Lys-Gly) (interchain with G-Cter in SUMO2)" evidence="2">
    <location>
        <position position="323"/>
    </location>
</feature>
<organism>
    <name type="scientific">Pongo abelii</name>
    <name type="common">Sumatran orangutan</name>
    <name type="synonym">Pongo pygmaeus abelii</name>
    <dbReference type="NCBI Taxonomy" id="9601"/>
    <lineage>
        <taxon>Eukaryota</taxon>
        <taxon>Metazoa</taxon>
        <taxon>Chordata</taxon>
        <taxon>Craniata</taxon>
        <taxon>Vertebrata</taxon>
        <taxon>Euteleostomi</taxon>
        <taxon>Mammalia</taxon>
        <taxon>Eutheria</taxon>
        <taxon>Euarchontoglires</taxon>
        <taxon>Primates</taxon>
        <taxon>Haplorrhini</taxon>
        <taxon>Catarrhini</taxon>
        <taxon>Hominidae</taxon>
        <taxon>Pongo</taxon>
    </lineage>
</organism>
<name>TOIP1_PONAB</name>
<comment type="function">
    <text evidence="1">Required for nuclear membrane integrity. Induces TOR1A and TOR1B ATPase activity and is required for their location on the nuclear membrane. Binds to A- and B-type lamins. Possible role in membrane attachment and assembly of the nuclear lamina (By similarity).</text>
</comment>
<comment type="subunit">
    <text evidence="1">Interacts with ATP1B4. Interacts with TOR1A (ATP-bound). Interacts with TOR1B, TOR2A and TOR3A (By similarity).</text>
</comment>
<comment type="subcellular location">
    <subcellularLocation>
        <location evidence="1">Nucleus inner membrane</location>
        <topology evidence="1">Single-pass membrane protein</topology>
    </subcellularLocation>
</comment>
<comment type="similarity">
    <text evidence="7">Belongs to the TOR1AIP family.</text>
</comment>
<sequence length="598" mass="67589">MAGEGRRAEAVREGWGVYVTPRAPIREGRGRLAPQNGGSSDAPAYRTSLSRQGRREVRFSDEPPEVYGDFEPLVDKERSPVGKRTRLEEFRSDSAKEEVRESAYYLRSRQRRQPRPQEAEEMKTRRTTRLQQQHSQQPPLQPSPVMTRRGLRDSHSSEEDEPSSPTDLSQTISKKTVRSIQEAPAESEDLVISLRRPPLRYPRSEATSVQQKVNFSEEGETEDDQDSSHSSVTTVKSRSRDSDESGDKTTRSSSQYIESFWQSSQSQNFTAHDKQPSVLSSGYQKTPQEWAPQTARMRTRMQTSSPGKSSIYGSFSDDDSILKSELGNQSPSTSSQQVTGQPQNASFVKRNWWWLLPLIAALASGSFWFFSTPEVETTAVQEFQNQMNQLKNKYQGQDEKLWKRSQTFLEKHLNSSHPRSQPAILLLTAARDAEEALRCLSEQIADAYSSFHSVRAIRIDGTDKATQDSDTVKLEVDQELSNGLKNGQNAAVVHRFESFPAGSTLIFYKYCDHENAAFKDVALVLTVLLEEETLGTSLGLKEVEEKVRDFLKVKFTNSNTPNSYNHMDPDKLNGLWSRISHLVLPVQPENALKRGICL</sequence>